<dbReference type="EMBL" id="K02708">
    <property type="status" value="NOT_ANNOTATED_CDS"/>
    <property type="molecule type" value="Genomic_DNA"/>
</dbReference>
<dbReference type="SMR" id="P03130"/>
<dbReference type="DIP" id="DIP-1091N"/>
<dbReference type="Proteomes" id="UP000008787">
    <property type="component" value="Segment"/>
</dbReference>
<dbReference type="GO" id="GO:0030430">
    <property type="term" value="C:host cell cytoplasm"/>
    <property type="evidence" value="ECO:0007669"/>
    <property type="project" value="UniProtKB-SubCell"/>
</dbReference>
<dbReference type="GO" id="GO:0042025">
    <property type="term" value="C:host cell nucleus"/>
    <property type="evidence" value="ECO:0007669"/>
    <property type="project" value="UniProtKB-SubCell"/>
</dbReference>
<dbReference type="GO" id="GO:0003677">
    <property type="term" value="F:DNA binding"/>
    <property type="evidence" value="ECO:0007669"/>
    <property type="project" value="UniProtKB-UniRule"/>
</dbReference>
<dbReference type="GO" id="GO:0003700">
    <property type="term" value="F:DNA-binding transcription factor activity"/>
    <property type="evidence" value="ECO:0007669"/>
    <property type="project" value="UniProtKB-UniRule"/>
</dbReference>
<dbReference type="GO" id="GO:0019904">
    <property type="term" value="F:protein domain specific binding"/>
    <property type="evidence" value="ECO:0007669"/>
    <property type="project" value="UniProtKB-UniRule"/>
</dbReference>
<dbReference type="GO" id="GO:0008270">
    <property type="term" value="F:zinc ion binding"/>
    <property type="evidence" value="ECO:0007669"/>
    <property type="project" value="UniProtKB-KW"/>
</dbReference>
<dbReference type="GO" id="GO:0006351">
    <property type="term" value="P:DNA-templated transcription"/>
    <property type="evidence" value="ECO:0007669"/>
    <property type="project" value="UniProtKB-UniRule"/>
</dbReference>
<dbReference type="GO" id="GO:0039645">
    <property type="term" value="P:symbiont-mediated perturbation of host cell cycle G1/S transition checkpoint"/>
    <property type="evidence" value="ECO:0007669"/>
    <property type="project" value="UniProtKB-UniRule"/>
</dbReference>
<dbReference type="GO" id="GO:0052170">
    <property type="term" value="P:symbiont-mediated suppression of host innate immune response"/>
    <property type="evidence" value="ECO:0007669"/>
    <property type="project" value="UniProtKB-KW"/>
</dbReference>
<dbReference type="GO" id="GO:0039502">
    <property type="term" value="P:symbiont-mediated suppression of host type I interferon-mediated signaling pathway"/>
    <property type="evidence" value="ECO:0007669"/>
    <property type="project" value="UniProtKB-UniRule"/>
</dbReference>
<dbReference type="Gene3D" id="3.30.160.330">
    <property type="match status" value="1"/>
</dbReference>
<dbReference type="HAMAP" id="MF_04004">
    <property type="entry name" value="PPV_E7"/>
    <property type="match status" value="1"/>
</dbReference>
<dbReference type="InterPro" id="IPR000148">
    <property type="entry name" value="Papilloma_E7"/>
</dbReference>
<dbReference type="Pfam" id="PF00527">
    <property type="entry name" value="E7"/>
    <property type="match status" value="1"/>
</dbReference>
<dbReference type="PIRSF" id="PIRSF003407">
    <property type="entry name" value="Papvi_E7"/>
    <property type="match status" value="1"/>
</dbReference>
<dbReference type="SUPFAM" id="SSF161234">
    <property type="entry name" value="E7 C-terminal domain-like"/>
    <property type="match status" value="1"/>
</dbReference>
<comment type="function">
    <text evidence="1">Plays a role in viral genome replication by driving entry of quiescent cells into the cell cycle. Stimulation of progression from G1 to S phase allows the virus to efficiently use the cellular DNA replicating machinery to achieve viral genome replication. E7 protein has both transforming and trans-activating activities. Induces the disassembly of the E2F1 transcription factor from RB1, with subsequent transcriptional activation of E2F1-regulated S-phase genes. Interferes with host histone deacetylation mediated by HDAC1 and HDAC2, leading to transcription activation. Also plays a role in the inhibition of both antiviral and antiproliferative functions of host interferon alpha. Interaction with host TMEM173/STING impairs the ability of TMEM173/STING to sense cytosolic DNA and promote the production of type I interferon (IFN-alpha and IFN-beta).</text>
</comment>
<comment type="subunit">
    <text evidence="1">Homodimer. Homooligomer. Interacts with host RB1; this interaction induces dissociation of RB1-E2F1 complex thereby disrupting RB1 activity. Interacts with host EP300; this interaction represses EP300 transcriptional activity. Interacts with protein E2; this interaction inhibits E7 oncogenic activity. Interacts with host TMEM173/STING; this interaction impairs the ability of TMEM173/STING to sense cytosolic DNA and promote the production of type I interferon (IFN-alpha and IFN-beta).</text>
</comment>
<comment type="subcellular location">
    <subcellularLocation>
        <location evidence="1">Host cytoplasm</location>
    </subcellularLocation>
    <subcellularLocation>
        <location evidence="1">Host nucleus</location>
    </subcellularLocation>
    <text evidence="1">Predominantly found in the host nucleus.</text>
</comment>
<comment type="domain">
    <text evidence="1">The E7 terminal domain is an intrinsically disordered domain, whose flexibility and conformational transitions confer target adaptability to the oncoprotein. It allows adaptation to a variety of protein targets and exposes the PEST degradation sequence that regulates its turnover in the cell.</text>
</comment>
<comment type="PTM">
    <text evidence="1">Highly phosphorylated.</text>
</comment>
<comment type="similarity">
    <text evidence="1">Belongs to the papillomaviridae E7 protein family.</text>
</comment>
<proteinExistence type="inferred from homology"/>
<organism>
    <name type="scientific">Cottontail rabbit papillomavirus (strain Kansas)</name>
    <name type="common">CRPV</name>
    <name type="synonym">Papillomavirus sylvilagi</name>
    <dbReference type="NCBI Taxonomy" id="31553"/>
    <lineage>
        <taxon>Viruses</taxon>
        <taxon>Monodnaviria</taxon>
        <taxon>Shotokuvirae</taxon>
        <taxon>Cossaviricota</taxon>
        <taxon>Papovaviricetes</taxon>
        <taxon>Zurhausenvirales</taxon>
        <taxon>Papillomaviridae</taxon>
        <taxon>Firstpapillomavirinae</taxon>
        <taxon>Kappapapillomavirus</taxon>
        <taxon>Kappapapillomavirus 2</taxon>
    </lineage>
</organism>
<sequence>MIGRTPKLSELVLGETAEALSLHCDEALENLSDDDEEDHQDRQVFIERPYAVSVPCKRCRQTISFVCVCAPEAIRTLNRLLSASLSLVCPECCN</sequence>
<protein>
    <recommendedName>
        <fullName evidence="1">Protein E7</fullName>
    </recommendedName>
</protein>
<organismHost>
    <name type="scientific">Sylvilagus floridanus</name>
    <name type="common">Cottontail rabbit</name>
    <dbReference type="NCBI Taxonomy" id="9988"/>
</organismHost>
<accession>P03130</accession>
<keyword id="KW-0010">Activator</keyword>
<keyword id="KW-0238">DNA-binding</keyword>
<keyword id="KW-0244">Early protein</keyword>
<keyword id="KW-1078">G1/S host cell cycle checkpoint dysregulation by virus</keyword>
<keyword id="KW-1035">Host cytoplasm</keyword>
<keyword id="KW-1048">Host nucleus</keyword>
<keyword id="KW-0945">Host-virus interaction</keyword>
<keyword id="KW-1090">Inhibition of host innate immune response by virus</keyword>
<keyword id="KW-1114">Inhibition of host interferon signaling pathway by virus</keyword>
<keyword id="KW-0922">Interferon antiviral system evasion</keyword>
<keyword id="KW-0479">Metal-binding</keyword>
<keyword id="KW-1121">Modulation of host cell cycle by virus</keyword>
<keyword id="KW-0553">Oncogene</keyword>
<keyword id="KW-1185">Reference proteome</keyword>
<keyword id="KW-0804">Transcription</keyword>
<keyword id="KW-0805">Transcription regulation</keyword>
<keyword id="KW-0899">Viral immunoevasion</keyword>
<keyword id="KW-0862">Zinc</keyword>
<keyword id="KW-0863">Zinc-finger</keyword>
<feature type="chain" id="PRO_0000133466" description="Protein E7">
    <location>
        <begin position="1"/>
        <end position="94"/>
    </location>
</feature>
<feature type="zinc finger region" evidence="1">
    <location>
        <begin position="56"/>
        <end position="92"/>
    </location>
</feature>
<feature type="region of interest" description="E7 terminal domain" evidence="1">
    <location>
        <begin position="1"/>
        <end position="42"/>
    </location>
</feature>
<feature type="short sequence motif" description="LXCXE motif; interaction with host RB1 and TMEM173/STING" evidence="1">
    <location>
        <begin position="22"/>
        <end position="26"/>
    </location>
</feature>
<feature type="short sequence motif" description="Nuclear export signal" evidence="1">
    <location>
        <begin position="74"/>
        <end position="82"/>
    </location>
</feature>
<evidence type="ECO:0000255" key="1">
    <source>
        <dbReference type="HAMAP-Rule" id="MF_04004"/>
    </source>
</evidence>
<reference key="1">
    <citation type="journal article" date="1985" name="Proc. Natl. Acad. Sci. U.S.A.">
        <title>Genomic structure of the cottontail rabbit (Shope) papillomavirus.</title>
        <authorList>
            <person name="Giri I."/>
            <person name="Danos O."/>
            <person name="Yaniv M."/>
        </authorList>
    </citation>
    <scope>NUCLEOTIDE SEQUENCE [GENOMIC DNA]</scope>
</reference>
<name>VE7_CRPVK</name>
<gene>
    <name evidence="1" type="primary">E7</name>
</gene>